<feature type="chain" id="PRO_0000267297" description="dTTP/UTP pyrophosphatase">
    <location>
        <begin position="1"/>
        <end position="187"/>
    </location>
</feature>
<feature type="active site" description="Proton acceptor" evidence="1">
    <location>
        <position position="65"/>
    </location>
</feature>
<feature type="site" description="Important for substrate specificity" evidence="1">
    <location>
        <position position="9"/>
    </location>
</feature>
<feature type="site" description="Important for substrate specificity" evidence="1">
    <location>
        <position position="66"/>
    </location>
</feature>
<feature type="site" description="Important for substrate specificity" evidence="1">
    <location>
        <position position="148"/>
    </location>
</feature>
<organism>
    <name type="scientific">Deinococcus geothermalis (strain DSM 11300 / CIP 105573 / AG-3a)</name>
    <dbReference type="NCBI Taxonomy" id="319795"/>
    <lineage>
        <taxon>Bacteria</taxon>
        <taxon>Thermotogati</taxon>
        <taxon>Deinococcota</taxon>
        <taxon>Deinococci</taxon>
        <taxon>Deinococcales</taxon>
        <taxon>Deinococcaceae</taxon>
        <taxon>Deinococcus</taxon>
    </lineage>
</organism>
<dbReference type="EC" id="3.6.1.9" evidence="1"/>
<dbReference type="EMBL" id="CP000359">
    <property type="protein sequence ID" value="ABF45563.1"/>
    <property type="molecule type" value="Genomic_DNA"/>
</dbReference>
<dbReference type="RefSeq" id="WP_011530400.1">
    <property type="nucleotide sequence ID" value="NC_008025.1"/>
</dbReference>
<dbReference type="SMR" id="Q1IYX1"/>
<dbReference type="STRING" id="319795.Dgeo_1267"/>
<dbReference type="KEGG" id="dge:Dgeo_1267"/>
<dbReference type="eggNOG" id="COG0424">
    <property type="taxonomic scope" value="Bacteria"/>
</dbReference>
<dbReference type="HOGENOM" id="CLU_040416_0_0_0"/>
<dbReference type="Proteomes" id="UP000002431">
    <property type="component" value="Chromosome"/>
</dbReference>
<dbReference type="GO" id="GO:0005737">
    <property type="term" value="C:cytoplasm"/>
    <property type="evidence" value="ECO:0007669"/>
    <property type="project" value="UniProtKB-SubCell"/>
</dbReference>
<dbReference type="GO" id="GO:0036218">
    <property type="term" value="F:dTTP diphosphatase activity"/>
    <property type="evidence" value="ECO:0007669"/>
    <property type="project" value="RHEA"/>
</dbReference>
<dbReference type="GO" id="GO:0036221">
    <property type="term" value="F:UTP diphosphatase activity"/>
    <property type="evidence" value="ECO:0007669"/>
    <property type="project" value="RHEA"/>
</dbReference>
<dbReference type="GO" id="GO:0009117">
    <property type="term" value="P:nucleotide metabolic process"/>
    <property type="evidence" value="ECO:0007669"/>
    <property type="project" value="UniProtKB-KW"/>
</dbReference>
<dbReference type="CDD" id="cd00555">
    <property type="entry name" value="Maf"/>
    <property type="match status" value="1"/>
</dbReference>
<dbReference type="Gene3D" id="3.90.950.10">
    <property type="match status" value="1"/>
</dbReference>
<dbReference type="HAMAP" id="MF_00528">
    <property type="entry name" value="Maf"/>
    <property type="match status" value="1"/>
</dbReference>
<dbReference type="InterPro" id="IPR029001">
    <property type="entry name" value="ITPase-like_fam"/>
</dbReference>
<dbReference type="InterPro" id="IPR003697">
    <property type="entry name" value="Maf-like"/>
</dbReference>
<dbReference type="NCBIfam" id="TIGR00172">
    <property type="entry name" value="maf"/>
    <property type="match status" value="1"/>
</dbReference>
<dbReference type="NCBIfam" id="NF010941">
    <property type="entry name" value="PRK14361.1"/>
    <property type="match status" value="1"/>
</dbReference>
<dbReference type="PANTHER" id="PTHR43213">
    <property type="entry name" value="BIFUNCTIONAL DTTP/UTP PYROPHOSPHATASE/METHYLTRANSFERASE PROTEIN-RELATED"/>
    <property type="match status" value="1"/>
</dbReference>
<dbReference type="PANTHER" id="PTHR43213:SF5">
    <property type="entry name" value="BIFUNCTIONAL DTTP_UTP PYROPHOSPHATASE_METHYLTRANSFERASE PROTEIN-RELATED"/>
    <property type="match status" value="1"/>
</dbReference>
<dbReference type="Pfam" id="PF02545">
    <property type="entry name" value="Maf"/>
    <property type="match status" value="1"/>
</dbReference>
<dbReference type="PIRSF" id="PIRSF006305">
    <property type="entry name" value="Maf"/>
    <property type="match status" value="1"/>
</dbReference>
<dbReference type="SUPFAM" id="SSF52972">
    <property type="entry name" value="ITPase-like"/>
    <property type="match status" value="1"/>
</dbReference>
<protein>
    <recommendedName>
        <fullName evidence="1">dTTP/UTP pyrophosphatase</fullName>
        <shortName evidence="1">dTTPase/UTPase</shortName>
        <ecNumber evidence="1">3.6.1.9</ecNumber>
    </recommendedName>
    <alternativeName>
        <fullName evidence="1">Nucleoside triphosphate pyrophosphatase</fullName>
    </alternativeName>
    <alternativeName>
        <fullName evidence="1">Nucleotide pyrophosphatase</fullName>
        <shortName evidence="1">Nucleotide PPase</shortName>
    </alternativeName>
</protein>
<accession>Q1IYX1</accession>
<name>NTPPA_DEIGD</name>
<sequence>MILASGSPRRRDLLANLGVPFRVVVSGEAEDRPERDPARLAGELATLKARAVAQSHPDAVVIAADTVVALGEELLGKPADEAENWAFVRRLAGRTHQVYTGVTVLSGGQESGGVERTDVTFRALTDGEIAHYARTGEGLDKAGGYGIQGVGMALVARIDGDYSNVVGFPLTLVIRLLRGAGVAVWGE</sequence>
<reference key="1">
    <citation type="submission" date="2006-04" db="EMBL/GenBank/DDBJ databases">
        <title>Complete sequence of chromosome of Deinococcus geothermalis DSM 11300.</title>
        <authorList>
            <person name="Copeland A."/>
            <person name="Lucas S."/>
            <person name="Lapidus A."/>
            <person name="Barry K."/>
            <person name="Detter J.C."/>
            <person name="Glavina del Rio T."/>
            <person name="Hammon N."/>
            <person name="Israni S."/>
            <person name="Dalin E."/>
            <person name="Tice H."/>
            <person name="Pitluck S."/>
            <person name="Brettin T."/>
            <person name="Bruce D."/>
            <person name="Han C."/>
            <person name="Tapia R."/>
            <person name="Saunders E."/>
            <person name="Gilna P."/>
            <person name="Schmutz J."/>
            <person name="Larimer F."/>
            <person name="Land M."/>
            <person name="Hauser L."/>
            <person name="Kyrpides N."/>
            <person name="Kim E."/>
            <person name="Daly M.J."/>
            <person name="Fredrickson J.K."/>
            <person name="Makarova K.S."/>
            <person name="Gaidamakova E.K."/>
            <person name="Zhai M."/>
            <person name="Richardson P."/>
        </authorList>
    </citation>
    <scope>NUCLEOTIDE SEQUENCE [LARGE SCALE GENOMIC DNA]</scope>
    <source>
        <strain>DSM 11300 / CIP 105573 / AG-3a</strain>
    </source>
</reference>
<comment type="function">
    <text evidence="1">Nucleoside triphosphate pyrophosphatase that hydrolyzes dTTP and UTP. May have a dual role in cell division arrest and in preventing the incorporation of modified nucleotides into cellular nucleic acids.</text>
</comment>
<comment type="catalytic activity">
    <reaction evidence="1">
        <text>dTTP + H2O = dTMP + diphosphate + H(+)</text>
        <dbReference type="Rhea" id="RHEA:28534"/>
        <dbReference type="ChEBI" id="CHEBI:15377"/>
        <dbReference type="ChEBI" id="CHEBI:15378"/>
        <dbReference type="ChEBI" id="CHEBI:33019"/>
        <dbReference type="ChEBI" id="CHEBI:37568"/>
        <dbReference type="ChEBI" id="CHEBI:63528"/>
        <dbReference type="EC" id="3.6.1.9"/>
    </reaction>
</comment>
<comment type="catalytic activity">
    <reaction evidence="1">
        <text>UTP + H2O = UMP + diphosphate + H(+)</text>
        <dbReference type="Rhea" id="RHEA:29395"/>
        <dbReference type="ChEBI" id="CHEBI:15377"/>
        <dbReference type="ChEBI" id="CHEBI:15378"/>
        <dbReference type="ChEBI" id="CHEBI:33019"/>
        <dbReference type="ChEBI" id="CHEBI:46398"/>
        <dbReference type="ChEBI" id="CHEBI:57865"/>
        <dbReference type="EC" id="3.6.1.9"/>
    </reaction>
</comment>
<comment type="cofactor">
    <cofactor evidence="1">
        <name>a divalent metal cation</name>
        <dbReference type="ChEBI" id="CHEBI:60240"/>
    </cofactor>
</comment>
<comment type="subcellular location">
    <subcellularLocation>
        <location evidence="1">Cytoplasm</location>
    </subcellularLocation>
</comment>
<comment type="similarity">
    <text evidence="1">Belongs to the Maf family. YhdE subfamily.</text>
</comment>
<evidence type="ECO:0000255" key="1">
    <source>
        <dbReference type="HAMAP-Rule" id="MF_00528"/>
    </source>
</evidence>
<proteinExistence type="inferred from homology"/>
<gene>
    <name type="ordered locus">Dgeo_1267</name>
</gene>
<keyword id="KW-0963">Cytoplasm</keyword>
<keyword id="KW-0378">Hydrolase</keyword>
<keyword id="KW-0546">Nucleotide metabolism</keyword>